<reference key="1">
    <citation type="journal article" date="1997" name="Gene">
        <title>cDNA cloning and functional analysis of p44.5 and p55, two regulatory subunits of the 26S proteasome.</title>
        <authorList>
            <person name="Saito A."/>
            <person name="Watanabe T.K."/>
            <person name="Shimada Y."/>
            <person name="Fujiwara T."/>
            <person name="Slaughter C.A."/>
            <person name="DeMartino G.N."/>
            <person name="Tanahashi N."/>
            <person name="Tanaka K."/>
        </authorList>
    </citation>
    <scope>NUCLEOTIDE SEQUENCE [MRNA] (ISOFORM 1)</scope>
</reference>
<reference key="2">
    <citation type="journal article" date="2004" name="Nat. Genet.">
        <title>Complete sequencing and characterization of 21,243 full-length human cDNAs.</title>
        <authorList>
            <person name="Ota T."/>
            <person name="Suzuki Y."/>
            <person name="Nishikawa T."/>
            <person name="Otsuki T."/>
            <person name="Sugiyama T."/>
            <person name="Irie R."/>
            <person name="Wakamatsu A."/>
            <person name="Hayashi K."/>
            <person name="Sato H."/>
            <person name="Nagai K."/>
            <person name="Kimura K."/>
            <person name="Makita H."/>
            <person name="Sekine M."/>
            <person name="Obayashi M."/>
            <person name="Nishi T."/>
            <person name="Shibahara T."/>
            <person name="Tanaka T."/>
            <person name="Ishii S."/>
            <person name="Yamamoto J."/>
            <person name="Saito K."/>
            <person name="Kawai Y."/>
            <person name="Isono Y."/>
            <person name="Nakamura Y."/>
            <person name="Nagahari K."/>
            <person name="Murakami K."/>
            <person name="Yasuda T."/>
            <person name="Iwayanagi T."/>
            <person name="Wagatsuma M."/>
            <person name="Shiratori A."/>
            <person name="Sudo H."/>
            <person name="Hosoiri T."/>
            <person name="Kaku Y."/>
            <person name="Kodaira H."/>
            <person name="Kondo H."/>
            <person name="Sugawara M."/>
            <person name="Takahashi M."/>
            <person name="Kanda K."/>
            <person name="Yokoi T."/>
            <person name="Furuya T."/>
            <person name="Kikkawa E."/>
            <person name="Omura Y."/>
            <person name="Abe K."/>
            <person name="Kamihara K."/>
            <person name="Katsuta N."/>
            <person name="Sato K."/>
            <person name="Tanikawa M."/>
            <person name="Yamazaki M."/>
            <person name="Ninomiya K."/>
            <person name="Ishibashi T."/>
            <person name="Yamashita H."/>
            <person name="Murakawa K."/>
            <person name="Fujimori K."/>
            <person name="Tanai H."/>
            <person name="Kimata M."/>
            <person name="Watanabe M."/>
            <person name="Hiraoka S."/>
            <person name="Chiba Y."/>
            <person name="Ishida S."/>
            <person name="Ono Y."/>
            <person name="Takiguchi S."/>
            <person name="Watanabe S."/>
            <person name="Yosida M."/>
            <person name="Hotuta T."/>
            <person name="Kusano J."/>
            <person name="Kanehori K."/>
            <person name="Takahashi-Fujii A."/>
            <person name="Hara H."/>
            <person name="Tanase T.-O."/>
            <person name="Nomura Y."/>
            <person name="Togiya S."/>
            <person name="Komai F."/>
            <person name="Hara R."/>
            <person name="Takeuchi K."/>
            <person name="Arita M."/>
            <person name="Imose N."/>
            <person name="Musashino K."/>
            <person name="Yuuki H."/>
            <person name="Oshima A."/>
            <person name="Sasaki N."/>
            <person name="Aotsuka S."/>
            <person name="Yoshikawa Y."/>
            <person name="Matsunawa H."/>
            <person name="Ichihara T."/>
            <person name="Shiohata N."/>
            <person name="Sano S."/>
            <person name="Moriya S."/>
            <person name="Momiyama H."/>
            <person name="Satoh N."/>
            <person name="Takami S."/>
            <person name="Terashima Y."/>
            <person name="Suzuki O."/>
            <person name="Nakagawa S."/>
            <person name="Senoh A."/>
            <person name="Mizoguchi H."/>
            <person name="Goto Y."/>
            <person name="Shimizu F."/>
            <person name="Wakebe H."/>
            <person name="Hishigaki H."/>
            <person name="Watanabe T."/>
            <person name="Sugiyama A."/>
            <person name="Takemoto M."/>
            <person name="Kawakami B."/>
            <person name="Yamazaki M."/>
            <person name="Watanabe K."/>
            <person name="Kumagai A."/>
            <person name="Itakura S."/>
            <person name="Fukuzumi Y."/>
            <person name="Fujimori Y."/>
            <person name="Komiyama M."/>
            <person name="Tashiro H."/>
            <person name="Tanigami A."/>
            <person name="Fujiwara T."/>
            <person name="Ono T."/>
            <person name="Yamada K."/>
            <person name="Fujii Y."/>
            <person name="Ozaki K."/>
            <person name="Hirao M."/>
            <person name="Ohmori Y."/>
            <person name="Kawabata A."/>
            <person name="Hikiji T."/>
            <person name="Kobatake N."/>
            <person name="Inagaki H."/>
            <person name="Ikema Y."/>
            <person name="Okamoto S."/>
            <person name="Okitani R."/>
            <person name="Kawakami T."/>
            <person name="Noguchi S."/>
            <person name="Itoh T."/>
            <person name="Shigeta K."/>
            <person name="Senba T."/>
            <person name="Matsumura K."/>
            <person name="Nakajima Y."/>
            <person name="Mizuno T."/>
            <person name="Morinaga M."/>
            <person name="Sasaki M."/>
            <person name="Togashi T."/>
            <person name="Oyama M."/>
            <person name="Hata H."/>
            <person name="Watanabe M."/>
            <person name="Komatsu T."/>
            <person name="Mizushima-Sugano J."/>
            <person name="Satoh T."/>
            <person name="Shirai Y."/>
            <person name="Takahashi Y."/>
            <person name="Nakagawa K."/>
            <person name="Okumura K."/>
            <person name="Nagase T."/>
            <person name="Nomura N."/>
            <person name="Kikuchi H."/>
            <person name="Masuho Y."/>
            <person name="Yamashita R."/>
            <person name="Nakai K."/>
            <person name="Yada T."/>
            <person name="Nakamura Y."/>
            <person name="Ohara O."/>
            <person name="Isogai T."/>
            <person name="Sugano S."/>
        </authorList>
    </citation>
    <scope>NUCLEOTIDE SEQUENCE [LARGE SCALE MRNA] (ISOFORM 2)</scope>
    <source>
        <tissue>Tongue</tissue>
    </source>
</reference>
<reference key="3">
    <citation type="submission" date="2005-04" db="EMBL/GenBank/DDBJ databases">
        <authorList>
            <person name="Suzuki Y."/>
            <person name="Sugano S."/>
            <person name="Totoki Y."/>
            <person name="Toyoda A."/>
            <person name="Takeda T."/>
            <person name="Sakaki Y."/>
            <person name="Tanaka A."/>
            <person name="Yokoyama S."/>
        </authorList>
    </citation>
    <scope>NUCLEOTIDE SEQUENCE [LARGE SCALE MRNA] (ISOFORM 1)</scope>
    <source>
        <tissue>Brain</tissue>
    </source>
</reference>
<reference key="4">
    <citation type="journal article" date="2006" name="Nature">
        <title>DNA sequence of human chromosome 17 and analysis of rearrangement in the human lineage.</title>
        <authorList>
            <person name="Zody M.C."/>
            <person name="Garber M."/>
            <person name="Adams D.J."/>
            <person name="Sharpe T."/>
            <person name="Harrow J."/>
            <person name="Lupski J.R."/>
            <person name="Nicholson C."/>
            <person name="Searle S.M."/>
            <person name="Wilming L."/>
            <person name="Young S.K."/>
            <person name="Abouelleil A."/>
            <person name="Allen N.R."/>
            <person name="Bi W."/>
            <person name="Bloom T."/>
            <person name="Borowsky M.L."/>
            <person name="Bugalter B.E."/>
            <person name="Butler J."/>
            <person name="Chang J.L."/>
            <person name="Chen C.-K."/>
            <person name="Cook A."/>
            <person name="Corum B."/>
            <person name="Cuomo C.A."/>
            <person name="de Jong P.J."/>
            <person name="DeCaprio D."/>
            <person name="Dewar K."/>
            <person name="FitzGerald M."/>
            <person name="Gilbert J."/>
            <person name="Gibson R."/>
            <person name="Gnerre S."/>
            <person name="Goldstein S."/>
            <person name="Grafham D.V."/>
            <person name="Grocock R."/>
            <person name="Hafez N."/>
            <person name="Hagopian D.S."/>
            <person name="Hart E."/>
            <person name="Norman C.H."/>
            <person name="Humphray S."/>
            <person name="Jaffe D.B."/>
            <person name="Jones M."/>
            <person name="Kamal M."/>
            <person name="Khodiyar V.K."/>
            <person name="LaButti K."/>
            <person name="Laird G."/>
            <person name="Lehoczky J."/>
            <person name="Liu X."/>
            <person name="Lokyitsang T."/>
            <person name="Loveland J."/>
            <person name="Lui A."/>
            <person name="Macdonald P."/>
            <person name="Major J.E."/>
            <person name="Matthews L."/>
            <person name="Mauceli E."/>
            <person name="McCarroll S.A."/>
            <person name="Mihalev A.H."/>
            <person name="Mudge J."/>
            <person name="Nguyen C."/>
            <person name="Nicol R."/>
            <person name="O'Leary S.B."/>
            <person name="Osoegawa K."/>
            <person name="Schwartz D.C."/>
            <person name="Shaw-Smith C."/>
            <person name="Stankiewicz P."/>
            <person name="Steward C."/>
            <person name="Swarbreck D."/>
            <person name="Venkataraman V."/>
            <person name="Whittaker C.A."/>
            <person name="Yang X."/>
            <person name="Zimmer A.R."/>
            <person name="Bradley A."/>
            <person name="Hubbard T."/>
            <person name="Birren B.W."/>
            <person name="Rogers J."/>
            <person name="Lander E.S."/>
            <person name="Nusbaum C."/>
        </authorList>
    </citation>
    <scope>NUCLEOTIDE SEQUENCE [LARGE SCALE GENOMIC DNA]</scope>
</reference>
<reference key="5">
    <citation type="submission" date="2005-07" db="EMBL/GenBank/DDBJ databases">
        <authorList>
            <person name="Mural R.J."/>
            <person name="Istrail S."/>
            <person name="Sutton G."/>
            <person name="Florea L."/>
            <person name="Halpern A.L."/>
            <person name="Mobarry C.M."/>
            <person name="Lippert R."/>
            <person name="Walenz B."/>
            <person name="Shatkay H."/>
            <person name="Dew I."/>
            <person name="Miller J.R."/>
            <person name="Flanigan M.J."/>
            <person name="Edwards N.J."/>
            <person name="Bolanos R."/>
            <person name="Fasulo D."/>
            <person name="Halldorsson B.V."/>
            <person name="Hannenhalli S."/>
            <person name="Turner R."/>
            <person name="Yooseph S."/>
            <person name="Lu F."/>
            <person name="Nusskern D.R."/>
            <person name="Shue B.C."/>
            <person name="Zheng X.H."/>
            <person name="Zhong F."/>
            <person name="Delcher A.L."/>
            <person name="Huson D.H."/>
            <person name="Kravitz S.A."/>
            <person name="Mouchard L."/>
            <person name="Reinert K."/>
            <person name="Remington K.A."/>
            <person name="Clark A.G."/>
            <person name="Waterman M.S."/>
            <person name="Eichler E.E."/>
            <person name="Adams M.D."/>
            <person name="Hunkapiller M.W."/>
            <person name="Myers E.W."/>
            <person name="Venter J.C."/>
        </authorList>
    </citation>
    <scope>NUCLEOTIDE SEQUENCE [LARGE SCALE GENOMIC DNA]</scope>
</reference>
<reference key="6">
    <citation type="journal article" date="2004" name="Genome Res.">
        <title>The status, quality, and expansion of the NIH full-length cDNA project: the Mammalian Gene Collection (MGC).</title>
        <authorList>
            <consortium name="The MGC Project Team"/>
        </authorList>
    </citation>
    <scope>NUCLEOTIDE SEQUENCE [LARGE SCALE MRNA] (ISOFORM 1)</scope>
    <source>
        <tissue>Muscle</tissue>
        <tissue>Testis</tissue>
    </source>
</reference>
<reference key="7">
    <citation type="journal article" date="2003" name="Nat. Biotechnol.">
        <title>Exploring proteomes and analyzing protein processing by mass spectrometric identification of sorted N-terminal peptides.</title>
        <authorList>
            <person name="Gevaert K."/>
            <person name="Goethals M."/>
            <person name="Martens L."/>
            <person name="Van Damme J."/>
            <person name="Staes A."/>
            <person name="Thomas G.R."/>
            <person name="Vandekerckhove J."/>
        </authorList>
    </citation>
    <scope>PROTEIN SEQUENCE OF 2-12</scope>
    <scope>ACETYLATION AT ALA-2</scope>
    <source>
        <tissue>Platelet</tissue>
    </source>
</reference>
<reference key="8">
    <citation type="journal article" date="1992" name="Eur. J. Biochem.">
        <title>Demonstration that a human 26S proteolytic complex consists of a proteasome and multiple associated protein components and hydrolyzes ATP and ubiquitin-ligated proteins by closely linked mechanisms.</title>
        <authorList>
            <person name="Kanayama H.O."/>
            <person name="Tamura T."/>
            <person name="Ugai S."/>
            <person name="Kagawa S."/>
            <person name="Tanahashi N."/>
            <person name="Yoshimura T."/>
            <person name="Tanaka K."/>
            <person name="Ichihara A."/>
        </authorList>
    </citation>
    <scope>FUNCTION</scope>
</reference>
<reference key="9">
    <citation type="journal article" date="2003" name="Nature">
        <title>Proteomic characterization of the human centrosome by protein correlation profiling.</title>
        <authorList>
            <person name="Andersen J.S."/>
            <person name="Wilkinson C.J."/>
            <person name="Mayor T."/>
            <person name="Mortensen P."/>
            <person name="Nigg E.A."/>
            <person name="Mann M."/>
        </authorList>
    </citation>
    <scope>IDENTIFICATION BY MASS SPECTROMETRY</scope>
    <source>
        <tissue>Lymphoblast</tissue>
    </source>
</reference>
<reference key="10">
    <citation type="journal article" date="2007" name="Biochemistry">
        <title>Mass spectrometric characterization of the affinity-purified human 26S proteasome complex.</title>
        <authorList>
            <person name="Wang X."/>
            <person name="Chen C.-F."/>
            <person name="Baker P.R."/>
            <person name="Chen P.-L."/>
            <person name="Kaiser P."/>
            <person name="Huang L."/>
        </authorList>
    </citation>
    <scope>IDENTIFICATION BY MASS SPECTROMETRY [LARGE SCALE ANALYSIS]</scope>
    <source>
        <tissue>Embryonic kidney</tissue>
    </source>
</reference>
<reference key="11">
    <citation type="journal article" date="2009" name="Anal. Chem.">
        <title>Lys-N and trypsin cover complementary parts of the phosphoproteome in a refined SCX-based approach.</title>
        <authorList>
            <person name="Gauci S."/>
            <person name="Helbig A.O."/>
            <person name="Slijper M."/>
            <person name="Krijgsveld J."/>
            <person name="Heck A.J."/>
            <person name="Mohammed S."/>
        </authorList>
    </citation>
    <scope>ACETYLATION [LARGE SCALE ANALYSIS] AT ALA-2</scope>
    <scope>CLEAVAGE OF INITIATOR METHIONINE [LARGE SCALE ANALYSIS]</scope>
    <scope>IDENTIFICATION BY MASS SPECTROMETRY [LARGE SCALE ANALYSIS]</scope>
</reference>
<reference key="12">
    <citation type="journal article" date="2009" name="Science">
        <title>Lysine acetylation targets protein complexes and co-regulates major cellular functions.</title>
        <authorList>
            <person name="Choudhary C."/>
            <person name="Kumar C."/>
            <person name="Gnad F."/>
            <person name="Nielsen M.L."/>
            <person name="Rehman M."/>
            <person name="Walther T.C."/>
            <person name="Olsen J.V."/>
            <person name="Mann M."/>
        </authorList>
    </citation>
    <scope>ACETYLATION [LARGE SCALE ANALYSIS] AT LYS-221 AND LYS-368</scope>
    <scope>IDENTIFICATION BY MASS SPECTROMETRY [LARGE SCALE ANALYSIS]</scope>
</reference>
<reference key="13">
    <citation type="journal article" date="2011" name="BMC Syst. Biol.">
        <title>Initial characterization of the human central proteome.</title>
        <authorList>
            <person name="Burkard T.R."/>
            <person name="Planyavsky M."/>
            <person name="Kaupe I."/>
            <person name="Breitwieser F.P."/>
            <person name="Buerckstuemmer T."/>
            <person name="Bennett K.L."/>
            <person name="Superti-Furga G."/>
            <person name="Colinge J."/>
        </authorList>
    </citation>
    <scope>IDENTIFICATION BY MASS SPECTROMETRY [LARGE SCALE ANALYSIS]</scope>
</reference>
<reference key="14">
    <citation type="journal article" date="2014" name="J. Proteomics">
        <title>An enzyme assisted RP-RPLC approach for in-depth analysis of human liver phosphoproteome.</title>
        <authorList>
            <person name="Bian Y."/>
            <person name="Song C."/>
            <person name="Cheng K."/>
            <person name="Dong M."/>
            <person name="Wang F."/>
            <person name="Huang J."/>
            <person name="Sun D."/>
            <person name="Wang L."/>
            <person name="Ye M."/>
            <person name="Zou H."/>
        </authorList>
    </citation>
    <scope>IDENTIFICATION BY MASS SPECTROMETRY [LARGE SCALE ANALYSIS]</scope>
    <source>
        <tissue>Liver</tissue>
    </source>
</reference>
<reference key="15">
    <citation type="journal article" date="2014" name="Nat. Struct. Mol. Biol.">
        <title>Uncovering global SUMOylation signaling networks in a site-specific manner.</title>
        <authorList>
            <person name="Hendriks I.A."/>
            <person name="D'Souza R.C."/>
            <person name="Yang B."/>
            <person name="Verlaan-de Vries M."/>
            <person name="Mann M."/>
            <person name="Vertegaal A.C."/>
        </authorList>
    </citation>
    <scope>SUMOYLATION [LARGE SCALE ANALYSIS] AT LYS-92</scope>
    <scope>IDENTIFICATION BY MASS SPECTROMETRY [LARGE SCALE ANALYSIS]</scope>
</reference>
<reference key="16">
    <citation type="journal article" date="2014" name="Proc. Natl. Acad. Sci. U.S.A.">
        <title>Mapping of SUMO sites and analysis of SUMOylation changes induced by external stimuli.</title>
        <authorList>
            <person name="Impens F."/>
            <person name="Radoshevich L."/>
            <person name="Cossart P."/>
            <person name="Ribet D."/>
        </authorList>
    </citation>
    <scope>SUMOYLATION [LARGE SCALE ANALYSIS] AT LYS-92</scope>
    <scope>IDENTIFICATION BY MASS SPECTROMETRY [LARGE SCALE ANALYSIS]</scope>
</reference>
<reference key="17">
    <citation type="journal article" date="2015" name="Cell Rep.">
        <title>SUMO-2 orchestrates chromatin modifiers in response to DNA damage.</title>
        <authorList>
            <person name="Hendriks I.A."/>
            <person name="Treffers L.W."/>
            <person name="Verlaan-de Vries M."/>
            <person name="Olsen J.V."/>
            <person name="Vertegaal A.C."/>
        </authorList>
    </citation>
    <scope>SUMOYLATION [LARGE SCALE ANALYSIS] AT LYS-92</scope>
    <scope>IDENTIFICATION BY MASS SPECTROMETRY [LARGE SCALE ANALYSIS]</scope>
</reference>
<reference key="18">
    <citation type="journal article" date="2015" name="PLoS ONE">
        <title>Identification of Novel Proteins Co-Purifying with Cockayne Syndrome Group B (CSB) Reveals Potential Roles for CSB in RNA Metabolism and Chromatin Dynamics.</title>
        <authorList>
            <person name="Nicolai S."/>
            <person name="Filippi S."/>
            <person name="Caputo M."/>
            <person name="Cipak L."/>
            <person name="Gregan J."/>
            <person name="Ammerer G."/>
            <person name="Frontini M."/>
            <person name="Willems D."/>
            <person name="Prantera G."/>
            <person name="Balajee A.S."/>
            <person name="Proietti-De-Santis L."/>
        </authorList>
    </citation>
    <scope>INTERACTION WITH ERCC6</scope>
</reference>
<reference key="19">
    <citation type="journal article" date="2017" name="Am. J. Hum. Genet.">
        <title>De novo disruption of the proteasome regulatory subunit PSMD12 causes a syndromic neurodevelopmental disorder.</title>
        <authorList>
            <person name="Kuery S."/>
            <person name="Besnard T."/>
            <person name="Ebstein F."/>
            <person name="Khan T.N."/>
            <person name="Gambin T."/>
            <person name="Douglas J."/>
            <person name="Bacino C.A."/>
            <person name="Craigen W.J."/>
            <person name="Sanders S.J."/>
            <person name="Lehmann A."/>
            <person name="Latypova X."/>
            <person name="Khan K."/>
            <person name="Pacault M."/>
            <person name="Sacharow S."/>
            <person name="Glaser K."/>
            <person name="Bieth E."/>
            <person name="Perrin-Sabourin L."/>
            <person name="Jacquemont M.L."/>
            <person name="Cho M.T."/>
            <person name="Roeder E."/>
            <person name="Denomme-Pichon A.S."/>
            <person name="Monaghan K.G."/>
            <person name="Yuan B."/>
            <person name="Xia F."/>
            <person name="Simon S."/>
            <person name="Bonneau D."/>
            <person name="Parent P."/>
            <person name="Gilbert-Dussardier B."/>
            <person name="Odent S."/>
            <person name="Toutain A."/>
            <person name="Pasquier L."/>
            <person name="Barbouth D."/>
            <person name="Shaw C.A."/>
            <person name="Patel A."/>
            <person name="Smith J.L."/>
            <person name="Bi W."/>
            <person name="Schmitt S."/>
            <person name="Deb W."/>
            <person name="Nizon M."/>
            <person name="Mercier S."/>
            <person name="Vincent M."/>
            <person name="Rooryck C."/>
            <person name="Malan V."/>
            <person name="Briceno I."/>
            <person name="Gomez A."/>
            <person name="Nugent K.M."/>
            <person name="Gibson J.B."/>
            <person name="Cogne B."/>
            <person name="Lupski J.R."/>
            <person name="Stessman H.A.F."/>
            <person name="Eichler E.E."/>
            <person name="Retterer K."/>
            <person name="Yang Y."/>
            <person name="Redon R."/>
            <person name="Katsanis N."/>
            <person name="Rosenfeld J.A."/>
            <person name="Kloetzel P.M."/>
            <person name="Golzio C."/>
            <person name="Bezieau S."/>
            <person name="Stankiewicz P."/>
            <person name="Isidor B."/>
        </authorList>
    </citation>
    <scope>INVOLVEMENT IN STISS</scope>
</reference>
<reference key="20">
    <citation type="journal article" date="2017" name="Nat. Struct. Mol. Biol.">
        <title>Site-specific mapping of the human SUMO proteome reveals co-modification with phosphorylation.</title>
        <authorList>
            <person name="Hendriks I.A."/>
            <person name="Lyon D."/>
            <person name="Young C."/>
            <person name="Jensen L.J."/>
            <person name="Vertegaal A.C."/>
            <person name="Nielsen M.L."/>
        </authorList>
    </citation>
    <scope>SUMOYLATION [LARGE SCALE ANALYSIS] AT LYS-92</scope>
    <scope>IDENTIFICATION BY MASS SPECTROMETRY [LARGE SCALE ANALYSIS]</scope>
</reference>
<reference key="21">
    <citation type="journal article" date="2016" name="Nat. Struct. Mol. Biol.">
        <title>An atomic structure of the human 26S proteasome.</title>
        <authorList>
            <person name="Huang X."/>
            <person name="Luan B."/>
            <person name="Wu J."/>
            <person name="Shi Y."/>
        </authorList>
    </citation>
    <scope>STRUCTURE BY ELECTRON MICROSCOPY (3.50 ANGSTROMS)</scope>
    <scope>SUBUNIT</scope>
</reference>
<reference key="22">
    <citation type="journal article" date="2016" name="Proc. Natl. Acad. Sci. U.S.A.">
        <title>Structure of the human 26S proteasome at a resolution of 3.9 Aa.</title>
        <authorList>
            <person name="Schweitzer A."/>
            <person name="Aufderheide A."/>
            <person name="Rudack T."/>
            <person name="Beck F."/>
            <person name="Pfeifer G."/>
            <person name="Plitzko J.M."/>
            <person name="Sakata E."/>
            <person name="Schulten K."/>
            <person name="Foerster F."/>
            <person name="Baumeister W."/>
        </authorList>
    </citation>
    <scope>STRUCTURE BY ELECTRON MICROSCOPY (4.50 ANGSTROMS)</scope>
    <scope>SUBUNIT</scope>
</reference>
<accession>O00232</accession>
<accession>A6NP15</accession>
<accession>Q53HA2</accession>
<accession>Q6P053</accession>
<organism>
    <name type="scientific">Homo sapiens</name>
    <name type="common">Human</name>
    <dbReference type="NCBI Taxonomy" id="9606"/>
    <lineage>
        <taxon>Eukaryota</taxon>
        <taxon>Metazoa</taxon>
        <taxon>Chordata</taxon>
        <taxon>Craniata</taxon>
        <taxon>Vertebrata</taxon>
        <taxon>Euteleostomi</taxon>
        <taxon>Mammalia</taxon>
        <taxon>Eutheria</taxon>
        <taxon>Euarchontoglires</taxon>
        <taxon>Primates</taxon>
        <taxon>Haplorrhini</taxon>
        <taxon>Catarrhini</taxon>
        <taxon>Hominidae</taxon>
        <taxon>Homo</taxon>
    </lineage>
</organism>
<comment type="function">
    <text evidence="3">Component of the 26S proteasome, a multiprotein complex involved in the ATP-dependent degradation of ubiquitinated proteins. This complex plays a key role in the maintenance of protein homeostasis by removing misfolded or damaged proteins, which could impair cellular functions, and by removing proteins whose functions are no longer required. Therefore, the proteasome participates in numerous cellular processes, including cell cycle progression, apoptosis, or DNA damage repair.</text>
</comment>
<comment type="subunit">
    <text evidence="4 5 6">Component of the 19S proteasome regulatory particle complex (PubMed:27342858, PubMed:27428775). The 26S proteasome consists of a 20S core particle (CP) and two 19S regulatory subunits (RP) (PubMed:27342858, PubMed:27428775). The regulatory particle is made of a lid composed of 9 subunits including PSMD12, a base containing 6 ATPases and few additional components (PubMed:27342858, PubMed:27428775). Interacts with ERCC6 (PubMed:26030138).</text>
</comment>
<comment type="interaction">
    <interactant intactId="EBI-359733">
        <id>O00232</id>
    </interactant>
    <interactant intactId="EBI-359318">
        <id>P55036</id>
        <label>PSMD4</label>
    </interactant>
    <organismsDiffer>false</organismsDiffer>
    <experiments>5</experiments>
</comment>
<comment type="alternative products">
    <event type="alternative splicing"/>
    <isoform>
        <id>O00232-1</id>
        <name>1</name>
        <sequence type="displayed"/>
    </isoform>
    <isoform>
        <id>O00232-2</id>
        <name>2</name>
        <sequence type="described" ref="VSP_042718"/>
    </isoform>
</comment>
<comment type="disease" evidence="7">
    <disease id="DI-05014">
        <name>Stankiewicz-Isidor syndrome</name>
        <acronym>STISS</acronym>
        <description>A neurodevelopmental disorder characterized by delayed psychomotor development, intellectual disability, behavioral disorders, mild dysmorphism, ophthalmologic anomalies, feeding difficulties, deafness, and variable congenital malformations of the cardiac and/or urogenital systems.</description>
        <dbReference type="MIM" id="617516"/>
    </disease>
    <text>The disease is caused by variants affecting the gene represented in this entry.</text>
</comment>
<comment type="similarity">
    <text evidence="9">Belongs to the proteasome subunit p55 family.</text>
</comment>
<comment type="sequence caution" evidence="9">
    <conflict type="erroneous initiation">
        <sequence resource="EMBL-CDS" id="AAH65826"/>
    </conflict>
</comment>
<protein>
    <recommendedName>
        <fullName>26S proteasome non-ATPase regulatory subunit 12</fullName>
    </recommendedName>
    <alternativeName>
        <fullName>26S proteasome regulatory subunit RPN5</fullName>
    </alternativeName>
    <alternativeName>
        <fullName>26S proteasome regulatory subunit p55</fullName>
    </alternativeName>
</protein>
<name>PSD12_HUMAN</name>
<sequence>MADGGSERADGRIVKMEVDYSATVDQRLPECAKLAKEGRLQEVIETLLSLEKQTRTASDMVSTSRILVAVVKMCYEAKEWDLLNENIMLLSKRRSQLKQAVAKMVQQCCTYVEEITDLPIKLRLIDTLRMVTEGKIYVEIERARLTKTLATIKEQNGDVKEAASILQELQVETYGSMEKKERVEFILEQMRLCLAVKDYIRTQIISKKINTKFFQEENTEKLKLKYYNLMIQLDQHEGSYLSICKHYRAIYDTPCIQAESEKWQQALKSVVLYVILAPFDNEQSDLVHRISGDKKLEEIPKYKDLLKLFTTMELMRWSTLVEDYGMELRKGSLESPATDVFGSTEEGEKRWKDLKNRVVEHNIRIMAKYYTRITMKRMAQLLDLSVDESEAFLSNLVVNKTIFAKVDRLAGIINFQRPKDPNNLLNDWSQKLNSLMSLVNKTTHLIAKEEMIHNLQ</sequence>
<evidence type="ECO:0000255" key="1">
    <source>
        <dbReference type="PROSITE-ProRule" id="PRU01185"/>
    </source>
</evidence>
<evidence type="ECO:0000269" key="2">
    <source>
    </source>
</evidence>
<evidence type="ECO:0000269" key="3">
    <source>
    </source>
</evidence>
<evidence type="ECO:0000269" key="4">
    <source>
    </source>
</evidence>
<evidence type="ECO:0000269" key="5">
    <source>
    </source>
</evidence>
<evidence type="ECO:0000269" key="6">
    <source>
    </source>
</evidence>
<evidence type="ECO:0000269" key="7">
    <source>
    </source>
</evidence>
<evidence type="ECO:0000303" key="8">
    <source>
    </source>
</evidence>
<evidence type="ECO:0000305" key="9"/>
<evidence type="ECO:0007744" key="10">
    <source>
    </source>
</evidence>
<evidence type="ECO:0007744" key="11">
    <source>
    </source>
</evidence>
<evidence type="ECO:0007744" key="12">
    <source>
    </source>
</evidence>
<evidence type="ECO:0007744" key="13">
    <source>
    </source>
</evidence>
<evidence type="ECO:0007744" key="14">
    <source>
    </source>
</evidence>
<evidence type="ECO:0007744" key="15">
    <source>
    </source>
</evidence>
<evidence type="ECO:0007829" key="16">
    <source>
        <dbReference type="PDB" id="9E8J"/>
    </source>
</evidence>
<gene>
    <name type="primary">PSMD12</name>
</gene>
<proteinExistence type="evidence at protein level"/>
<feature type="initiator methionine" description="Removed" evidence="2 10">
    <location>
        <position position="1"/>
    </location>
</feature>
<feature type="chain" id="PRO_0000173861" description="26S proteasome non-ATPase regulatory subunit 12">
    <location>
        <begin position="2"/>
        <end position="456"/>
    </location>
</feature>
<feature type="domain" description="PCI" evidence="1">
    <location>
        <begin position="242"/>
        <end position="420"/>
    </location>
</feature>
<feature type="modified residue" description="N-acetylalanine" evidence="2 10">
    <location>
        <position position="2"/>
    </location>
</feature>
<feature type="modified residue" description="N6-acetyllysine" evidence="11">
    <location>
        <position position="221"/>
    </location>
</feature>
<feature type="modified residue" description="N6-acetyllysine" evidence="11">
    <location>
        <position position="368"/>
    </location>
</feature>
<feature type="cross-link" description="Glycyl lysine isopeptide (Lys-Gly) (interchain with G-Cter in SUMO1); alternate" evidence="12">
    <location>
        <position position="92"/>
    </location>
</feature>
<feature type="cross-link" description="Glycyl lysine isopeptide (Lys-Gly) (interchain with G-Cter in SUMO2); alternate" evidence="12 13 14 15">
    <location>
        <position position="92"/>
    </location>
</feature>
<feature type="splice variant" id="VSP_042718" description="In isoform 2." evidence="8">
    <location>
        <begin position="37"/>
        <end position="56"/>
    </location>
</feature>
<feature type="sequence variant" id="VAR_051558" description="In dbSNP:rs2230680.">
    <original>V</original>
    <variation>A</variation>
    <location>
        <position position="358"/>
    </location>
</feature>
<feature type="sequence conflict" description="In Ref. 3; BAD96399." evidence="9" ref="3">
    <original>P</original>
    <variation>S</variation>
    <location>
        <position position="300"/>
    </location>
</feature>
<feature type="sequence conflict" description="In Ref. 3; BAD96399." evidence="9" ref="3">
    <original>V</original>
    <variation>D</variation>
    <location>
        <position position="398"/>
    </location>
</feature>
<feature type="helix" evidence="16">
    <location>
        <begin position="21"/>
        <end position="37"/>
    </location>
</feature>
<feature type="helix" evidence="16">
    <location>
        <begin position="42"/>
        <end position="55"/>
    </location>
</feature>
<feature type="turn" evidence="16">
    <location>
        <begin position="56"/>
        <end position="58"/>
    </location>
</feature>
<feature type="helix" evidence="16">
    <location>
        <begin position="60"/>
        <end position="77"/>
    </location>
</feature>
<feature type="helix" evidence="16">
    <location>
        <begin position="80"/>
        <end position="91"/>
    </location>
</feature>
<feature type="helix" evidence="16">
    <location>
        <begin position="98"/>
        <end position="112"/>
    </location>
</feature>
<feature type="helix" evidence="16">
    <location>
        <begin position="118"/>
        <end position="132"/>
    </location>
</feature>
<feature type="helix" evidence="16">
    <location>
        <begin position="136"/>
        <end position="138"/>
    </location>
</feature>
<feature type="helix" evidence="16">
    <location>
        <begin position="139"/>
        <end position="155"/>
    </location>
</feature>
<feature type="helix" evidence="16">
    <location>
        <begin position="159"/>
        <end position="167"/>
    </location>
</feature>
<feature type="turn" evidence="16">
    <location>
        <begin position="171"/>
        <end position="173"/>
    </location>
</feature>
<feature type="helix" evidence="16">
    <location>
        <begin position="179"/>
        <end position="196"/>
    </location>
</feature>
<feature type="helix" evidence="16">
    <location>
        <begin position="199"/>
        <end position="208"/>
    </location>
</feature>
<feature type="strand" evidence="16">
    <location>
        <begin position="215"/>
        <end position="218"/>
    </location>
</feature>
<feature type="helix" evidence="16">
    <location>
        <begin position="220"/>
        <end position="237"/>
    </location>
</feature>
<feature type="helix" evidence="16">
    <location>
        <begin position="240"/>
        <end position="252"/>
    </location>
</feature>
<feature type="helix" evidence="16">
    <location>
        <begin position="254"/>
        <end position="258"/>
    </location>
</feature>
<feature type="helix" evidence="16">
    <location>
        <begin position="260"/>
        <end position="276"/>
    </location>
</feature>
<feature type="helix" evidence="16">
    <location>
        <begin position="281"/>
        <end position="291"/>
    </location>
</feature>
<feature type="helix" evidence="16">
    <location>
        <begin position="294"/>
        <end position="298"/>
    </location>
</feature>
<feature type="helix" evidence="16">
    <location>
        <begin position="300"/>
        <end position="308"/>
    </location>
</feature>
<feature type="helix" evidence="16">
    <location>
        <begin position="317"/>
        <end position="328"/>
    </location>
</feature>
<feature type="strand" evidence="16">
    <location>
        <begin position="333"/>
        <end position="335"/>
    </location>
</feature>
<feature type="helix" evidence="16">
    <location>
        <begin position="345"/>
        <end position="369"/>
    </location>
</feature>
<feature type="strand" evidence="16">
    <location>
        <begin position="370"/>
        <end position="372"/>
    </location>
</feature>
<feature type="helix" evidence="16">
    <location>
        <begin position="375"/>
        <end position="382"/>
    </location>
</feature>
<feature type="helix" evidence="16">
    <location>
        <begin position="386"/>
        <end position="398"/>
    </location>
</feature>
<feature type="turn" evidence="16">
    <location>
        <begin position="408"/>
        <end position="410"/>
    </location>
</feature>
<feature type="helix" evidence="16">
    <location>
        <begin position="421"/>
        <end position="452"/>
    </location>
</feature>
<keyword id="KW-0002">3D-structure</keyword>
<keyword id="KW-0007">Acetylation</keyword>
<keyword id="KW-0025">Alternative splicing</keyword>
<keyword id="KW-0903">Direct protein sequencing</keyword>
<keyword id="KW-0991">Intellectual disability</keyword>
<keyword id="KW-1017">Isopeptide bond</keyword>
<keyword id="KW-0647">Proteasome</keyword>
<keyword id="KW-1267">Proteomics identification</keyword>
<keyword id="KW-1185">Reference proteome</keyword>
<keyword id="KW-0832">Ubl conjugation</keyword>
<dbReference type="EMBL" id="AB003103">
    <property type="protein sequence ID" value="BAA19749.1"/>
    <property type="molecule type" value="mRNA"/>
</dbReference>
<dbReference type="EMBL" id="AK091198">
    <property type="protein sequence ID" value="BAG52303.1"/>
    <property type="molecule type" value="mRNA"/>
</dbReference>
<dbReference type="EMBL" id="AK222679">
    <property type="protein sequence ID" value="BAD96399.1"/>
    <property type="molecule type" value="mRNA"/>
</dbReference>
<dbReference type="EMBL" id="AC110921">
    <property type="status" value="NOT_ANNOTATED_CDS"/>
    <property type="molecule type" value="Genomic_DNA"/>
</dbReference>
<dbReference type="EMBL" id="CH471099">
    <property type="protein sequence ID" value="EAW89028.1"/>
    <property type="molecule type" value="Genomic_DNA"/>
</dbReference>
<dbReference type="EMBL" id="BC019062">
    <property type="protein sequence ID" value="AAH19062.1"/>
    <property type="molecule type" value="mRNA"/>
</dbReference>
<dbReference type="EMBL" id="BC065826">
    <property type="protein sequence ID" value="AAH65826.1"/>
    <property type="status" value="ALT_INIT"/>
    <property type="molecule type" value="mRNA"/>
</dbReference>
<dbReference type="CCDS" id="CCDS11669.1">
    <molecule id="O00232-1"/>
</dbReference>
<dbReference type="CCDS" id="CCDS11670.1">
    <molecule id="O00232-2"/>
</dbReference>
<dbReference type="PIR" id="PC6501">
    <property type="entry name" value="JC6523"/>
</dbReference>
<dbReference type="RefSeq" id="NP_001303270.1">
    <property type="nucleotide sequence ID" value="NM_001316341.1"/>
</dbReference>
<dbReference type="RefSeq" id="NP_002807.1">
    <molecule id="O00232-1"/>
    <property type="nucleotide sequence ID" value="NM_002816.5"/>
</dbReference>
<dbReference type="RefSeq" id="NP_777360.1">
    <molecule id="O00232-2"/>
    <property type="nucleotide sequence ID" value="NM_174871.4"/>
</dbReference>
<dbReference type="PDB" id="5GJQ">
    <property type="method" value="EM"/>
    <property type="resolution" value="4.50 A"/>
    <property type="chains" value="P=1-456"/>
</dbReference>
<dbReference type="PDB" id="5GJR">
    <property type="method" value="EM"/>
    <property type="resolution" value="3.50 A"/>
    <property type="chains" value="3/P=1-456"/>
</dbReference>
<dbReference type="PDB" id="5L4K">
    <property type="method" value="EM"/>
    <property type="resolution" value="4.50 A"/>
    <property type="chains" value="P=1-456"/>
</dbReference>
<dbReference type="PDB" id="5LN3">
    <property type="method" value="EM"/>
    <property type="resolution" value="6.80 A"/>
    <property type="chains" value="P=1-456"/>
</dbReference>
<dbReference type="PDB" id="5M32">
    <property type="method" value="EM"/>
    <property type="resolution" value="3.80 A"/>
    <property type="chains" value="k=1-456"/>
</dbReference>
<dbReference type="PDB" id="5T0C">
    <property type="method" value="EM"/>
    <property type="resolution" value="3.80 A"/>
    <property type="chains" value="AW/BW=1-456"/>
</dbReference>
<dbReference type="PDB" id="5T0G">
    <property type="method" value="EM"/>
    <property type="resolution" value="4.40 A"/>
    <property type="chains" value="W=1-456"/>
</dbReference>
<dbReference type="PDB" id="5T0H">
    <property type="method" value="EM"/>
    <property type="resolution" value="6.80 A"/>
    <property type="chains" value="W=1-456"/>
</dbReference>
<dbReference type="PDB" id="5T0I">
    <property type="method" value="EM"/>
    <property type="resolution" value="8.00 A"/>
    <property type="chains" value="W=1-456"/>
</dbReference>
<dbReference type="PDB" id="5T0J">
    <property type="method" value="EM"/>
    <property type="resolution" value="8.00 A"/>
    <property type="chains" value="W=1-456"/>
</dbReference>
<dbReference type="PDB" id="5VFP">
    <property type="method" value="EM"/>
    <property type="resolution" value="4.20 A"/>
    <property type="chains" value="W=1-456"/>
</dbReference>
<dbReference type="PDB" id="5VFQ">
    <property type="method" value="EM"/>
    <property type="resolution" value="4.20 A"/>
    <property type="chains" value="W=1-456"/>
</dbReference>
<dbReference type="PDB" id="5VFR">
    <property type="method" value="EM"/>
    <property type="resolution" value="4.90 A"/>
    <property type="chains" value="W=1-456"/>
</dbReference>
<dbReference type="PDB" id="5VFS">
    <property type="method" value="EM"/>
    <property type="resolution" value="3.60 A"/>
    <property type="chains" value="W=1-456"/>
</dbReference>
<dbReference type="PDB" id="5VFT">
    <property type="method" value="EM"/>
    <property type="resolution" value="7.00 A"/>
    <property type="chains" value="W=1-456"/>
</dbReference>
<dbReference type="PDB" id="5VFU">
    <property type="method" value="EM"/>
    <property type="resolution" value="5.80 A"/>
    <property type="chains" value="W=1-456"/>
</dbReference>
<dbReference type="PDB" id="5VGZ">
    <property type="method" value="EM"/>
    <property type="resolution" value="3.70 A"/>
    <property type="chains" value="W=1-456"/>
</dbReference>
<dbReference type="PDB" id="5VHF">
    <property type="method" value="EM"/>
    <property type="resolution" value="5.70 A"/>
    <property type="chains" value="W=1-456"/>
</dbReference>
<dbReference type="PDB" id="5VHH">
    <property type="method" value="EM"/>
    <property type="resolution" value="6.10 A"/>
    <property type="chains" value="W=1-456"/>
</dbReference>
<dbReference type="PDB" id="5VHI">
    <property type="method" value="EM"/>
    <property type="resolution" value="6.80 A"/>
    <property type="chains" value="W=1-456"/>
</dbReference>
<dbReference type="PDB" id="5VHS">
    <property type="method" value="EM"/>
    <property type="resolution" value="8.80 A"/>
    <property type="chains" value="W=1-456"/>
</dbReference>
<dbReference type="PDB" id="6MSB">
    <property type="method" value="EM"/>
    <property type="resolution" value="3.00 A"/>
    <property type="chains" value="W=1-456"/>
</dbReference>
<dbReference type="PDB" id="6MSD">
    <property type="method" value="EM"/>
    <property type="resolution" value="3.20 A"/>
    <property type="chains" value="W=1-456"/>
</dbReference>
<dbReference type="PDB" id="6MSE">
    <property type="method" value="EM"/>
    <property type="resolution" value="3.30 A"/>
    <property type="chains" value="W=1-456"/>
</dbReference>
<dbReference type="PDB" id="6MSG">
    <property type="method" value="EM"/>
    <property type="resolution" value="3.50 A"/>
    <property type="chains" value="W=1-456"/>
</dbReference>
<dbReference type="PDB" id="6MSH">
    <property type="method" value="EM"/>
    <property type="resolution" value="3.60 A"/>
    <property type="chains" value="W=1-456"/>
</dbReference>
<dbReference type="PDB" id="6MSJ">
    <property type="method" value="EM"/>
    <property type="resolution" value="3.30 A"/>
    <property type="chains" value="W=1-456"/>
</dbReference>
<dbReference type="PDB" id="6MSK">
    <property type="method" value="EM"/>
    <property type="resolution" value="3.20 A"/>
    <property type="chains" value="W=1-456"/>
</dbReference>
<dbReference type="PDB" id="6WJD">
    <property type="method" value="EM"/>
    <property type="resolution" value="4.80 A"/>
    <property type="chains" value="W=1-456"/>
</dbReference>
<dbReference type="PDB" id="6WJN">
    <property type="method" value="EM"/>
    <property type="resolution" value="5.70 A"/>
    <property type="chains" value="W=1-456"/>
</dbReference>
<dbReference type="PDB" id="7QXN">
    <property type="method" value="EM"/>
    <property type="resolution" value="3.70 A"/>
    <property type="chains" value="W=1-456"/>
</dbReference>
<dbReference type="PDB" id="7QXP">
    <property type="method" value="EM"/>
    <property type="resolution" value="3.60 A"/>
    <property type="chains" value="W=1-456"/>
</dbReference>
<dbReference type="PDB" id="7QXU">
    <property type="method" value="EM"/>
    <property type="resolution" value="4.30 A"/>
    <property type="chains" value="W=1-456"/>
</dbReference>
<dbReference type="PDB" id="7QXW">
    <property type="method" value="EM"/>
    <property type="resolution" value="4.10 A"/>
    <property type="chains" value="W=1-456"/>
</dbReference>
<dbReference type="PDB" id="7QXX">
    <property type="method" value="EM"/>
    <property type="resolution" value="4.40 A"/>
    <property type="chains" value="W=1-456"/>
</dbReference>
<dbReference type="PDB" id="7QY7">
    <property type="method" value="EM"/>
    <property type="resolution" value="4.70 A"/>
    <property type="chains" value="W=1-456"/>
</dbReference>
<dbReference type="PDB" id="7QYA">
    <property type="method" value="EM"/>
    <property type="resolution" value="4.80 A"/>
    <property type="chains" value="W=1-456"/>
</dbReference>
<dbReference type="PDB" id="7QYB">
    <property type="method" value="EM"/>
    <property type="resolution" value="4.10 A"/>
    <property type="chains" value="W=1-456"/>
</dbReference>
<dbReference type="PDB" id="7W37">
    <property type="method" value="EM"/>
    <property type="resolution" value="3.00 A"/>
    <property type="chains" value="W=1-456"/>
</dbReference>
<dbReference type="PDB" id="7W38">
    <property type="method" value="EM"/>
    <property type="resolution" value="3.10 A"/>
    <property type="chains" value="W=1-456"/>
</dbReference>
<dbReference type="PDB" id="7W39">
    <property type="method" value="EM"/>
    <property type="resolution" value="3.20 A"/>
    <property type="chains" value="W=1-456"/>
</dbReference>
<dbReference type="PDB" id="7W3A">
    <property type="method" value="EM"/>
    <property type="resolution" value="3.50 A"/>
    <property type="chains" value="W=1-456"/>
</dbReference>
<dbReference type="PDB" id="7W3B">
    <property type="method" value="EM"/>
    <property type="resolution" value="3.60 A"/>
    <property type="chains" value="W=1-456"/>
</dbReference>
<dbReference type="PDB" id="7W3C">
    <property type="method" value="EM"/>
    <property type="resolution" value="3.40 A"/>
    <property type="chains" value="W=1-456"/>
</dbReference>
<dbReference type="PDB" id="7W3F">
    <property type="method" value="EM"/>
    <property type="resolution" value="3.30 A"/>
    <property type="chains" value="W=1-456"/>
</dbReference>
<dbReference type="PDB" id="7W3G">
    <property type="method" value="EM"/>
    <property type="resolution" value="3.20 A"/>
    <property type="chains" value="W=1-456"/>
</dbReference>
<dbReference type="PDB" id="7W3H">
    <property type="method" value="EM"/>
    <property type="resolution" value="3.20 A"/>
    <property type="chains" value="W=1-456"/>
</dbReference>
<dbReference type="PDB" id="7W3I">
    <property type="method" value="EM"/>
    <property type="resolution" value="3.50 A"/>
    <property type="chains" value="W=1-456"/>
</dbReference>
<dbReference type="PDB" id="7W3J">
    <property type="method" value="EM"/>
    <property type="resolution" value="3.50 A"/>
    <property type="chains" value="W=1-456"/>
</dbReference>
<dbReference type="PDB" id="7W3K">
    <property type="method" value="EM"/>
    <property type="resolution" value="3.60 A"/>
    <property type="chains" value="W=1-456"/>
</dbReference>
<dbReference type="PDB" id="7W3M">
    <property type="method" value="EM"/>
    <property type="resolution" value="3.50 A"/>
    <property type="chains" value="W=1-456"/>
</dbReference>
<dbReference type="PDB" id="8CVT">
    <property type="method" value="EM"/>
    <property type="resolution" value="3.00 A"/>
    <property type="chains" value="W=1-456"/>
</dbReference>
<dbReference type="PDB" id="8JRI">
    <property type="method" value="EM"/>
    <property type="resolution" value="3.40 A"/>
    <property type="chains" value="W=1-456"/>
</dbReference>
<dbReference type="PDB" id="8JRT">
    <property type="method" value="EM"/>
    <property type="resolution" value="3.60 A"/>
    <property type="chains" value="W=1-456"/>
</dbReference>
<dbReference type="PDB" id="8JTI">
    <property type="method" value="EM"/>
    <property type="resolution" value="3.80 A"/>
    <property type="chains" value="W=1-456"/>
</dbReference>
<dbReference type="PDB" id="8K0G">
    <property type="method" value="EM"/>
    <property type="resolution" value="3.80 A"/>
    <property type="chains" value="W=1-456"/>
</dbReference>
<dbReference type="PDB" id="8USB">
    <property type="method" value="EM"/>
    <property type="resolution" value="2.73 A"/>
    <property type="chains" value="W=1-456"/>
</dbReference>
<dbReference type="PDB" id="8USC">
    <property type="method" value="EM"/>
    <property type="resolution" value="3.10 A"/>
    <property type="chains" value="W=1-456"/>
</dbReference>
<dbReference type="PDB" id="9E8G">
    <property type="method" value="EM"/>
    <property type="resolution" value="3.01 A"/>
    <property type="chains" value="W=1-456"/>
</dbReference>
<dbReference type="PDB" id="9E8H">
    <property type="method" value="EM"/>
    <property type="resolution" value="2.90 A"/>
    <property type="chains" value="W=1-456"/>
</dbReference>
<dbReference type="PDB" id="9E8I">
    <property type="method" value="EM"/>
    <property type="resolution" value="2.87 A"/>
    <property type="chains" value="W=1-456"/>
</dbReference>
<dbReference type="PDB" id="9E8J">
    <property type="method" value="EM"/>
    <property type="resolution" value="3.47 A"/>
    <property type="chains" value="W=1-456"/>
</dbReference>
<dbReference type="PDB" id="9E8K">
    <property type="method" value="EM"/>
    <property type="resolution" value="4.08 A"/>
    <property type="chains" value="W=1-456"/>
</dbReference>
<dbReference type="PDB" id="9E8L">
    <property type="method" value="EM"/>
    <property type="resolution" value="3.59 A"/>
    <property type="chains" value="W=1-456"/>
</dbReference>
<dbReference type="PDB" id="9E8N">
    <property type="method" value="EM"/>
    <property type="resolution" value="3.62 A"/>
    <property type="chains" value="W=1-456"/>
</dbReference>
<dbReference type="PDB" id="9E8O">
    <property type="method" value="EM"/>
    <property type="resolution" value="3.10 A"/>
    <property type="chains" value="W=1-456"/>
</dbReference>
<dbReference type="PDB" id="9E8Q">
    <property type="method" value="EM"/>
    <property type="resolution" value="3.16 A"/>
    <property type="chains" value="W=1-456"/>
</dbReference>
<dbReference type="PDBsum" id="5GJQ"/>
<dbReference type="PDBsum" id="5GJR"/>
<dbReference type="PDBsum" id="5L4K"/>
<dbReference type="PDBsum" id="5LN3"/>
<dbReference type="PDBsum" id="5M32"/>
<dbReference type="PDBsum" id="5T0C"/>
<dbReference type="PDBsum" id="5T0G"/>
<dbReference type="PDBsum" id="5T0H"/>
<dbReference type="PDBsum" id="5T0I"/>
<dbReference type="PDBsum" id="5T0J"/>
<dbReference type="PDBsum" id="5VFP"/>
<dbReference type="PDBsum" id="5VFQ"/>
<dbReference type="PDBsum" id="5VFR"/>
<dbReference type="PDBsum" id="5VFS"/>
<dbReference type="PDBsum" id="5VFT"/>
<dbReference type="PDBsum" id="5VFU"/>
<dbReference type="PDBsum" id="5VGZ"/>
<dbReference type="PDBsum" id="5VHF"/>
<dbReference type="PDBsum" id="5VHH"/>
<dbReference type="PDBsum" id="5VHI"/>
<dbReference type="PDBsum" id="5VHS"/>
<dbReference type="PDBsum" id="6MSB"/>
<dbReference type="PDBsum" id="6MSD"/>
<dbReference type="PDBsum" id="6MSE"/>
<dbReference type="PDBsum" id="6MSG"/>
<dbReference type="PDBsum" id="6MSH"/>
<dbReference type="PDBsum" id="6MSJ"/>
<dbReference type="PDBsum" id="6MSK"/>
<dbReference type="PDBsum" id="6WJD"/>
<dbReference type="PDBsum" id="6WJN"/>
<dbReference type="PDBsum" id="7QXN"/>
<dbReference type="PDBsum" id="7QXP"/>
<dbReference type="PDBsum" id="7QXU"/>
<dbReference type="PDBsum" id="7QXW"/>
<dbReference type="PDBsum" id="7QXX"/>
<dbReference type="PDBsum" id="7QY7"/>
<dbReference type="PDBsum" id="7QYA"/>
<dbReference type="PDBsum" id="7QYB"/>
<dbReference type="PDBsum" id="7W37"/>
<dbReference type="PDBsum" id="7W38"/>
<dbReference type="PDBsum" id="7W39"/>
<dbReference type="PDBsum" id="7W3A"/>
<dbReference type="PDBsum" id="7W3B"/>
<dbReference type="PDBsum" id="7W3C"/>
<dbReference type="PDBsum" id="7W3F"/>
<dbReference type="PDBsum" id="7W3G"/>
<dbReference type="PDBsum" id="7W3H"/>
<dbReference type="PDBsum" id="7W3I"/>
<dbReference type="PDBsum" id="7W3J"/>
<dbReference type="PDBsum" id="7W3K"/>
<dbReference type="PDBsum" id="7W3M"/>
<dbReference type="PDBsum" id="8CVT"/>
<dbReference type="PDBsum" id="8JRI"/>
<dbReference type="PDBsum" id="8JRT"/>
<dbReference type="PDBsum" id="8JTI"/>
<dbReference type="PDBsum" id="8K0G"/>
<dbReference type="PDBsum" id="8USB"/>
<dbReference type="PDBsum" id="8USC"/>
<dbReference type="PDBsum" id="9E8G"/>
<dbReference type="PDBsum" id="9E8H"/>
<dbReference type="PDBsum" id="9E8I"/>
<dbReference type="PDBsum" id="9E8J"/>
<dbReference type="PDBsum" id="9E8K"/>
<dbReference type="PDBsum" id="9E8L"/>
<dbReference type="PDBsum" id="9E8N"/>
<dbReference type="PDBsum" id="9E8O"/>
<dbReference type="PDBsum" id="9E8Q"/>
<dbReference type="EMDB" id="EMD-14201"/>
<dbReference type="EMDB" id="EMD-14202"/>
<dbReference type="EMDB" id="EMD-14203"/>
<dbReference type="EMDB" id="EMD-14204"/>
<dbReference type="EMDB" id="EMD-14205"/>
<dbReference type="EMDB" id="EMD-14209"/>
<dbReference type="EMDB" id="EMD-14210"/>
<dbReference type="EMDB" id="EMD-14211"/>
<dbReference type="EMDB" id="EMD-21691"/>
<dbReference type="EMDB" id="EMD-21696"/>
<dbReference type="EMDB" id="EMD-27018"/>
<dbReference type="EMDB" id="EMD-32272"/>
<dbReference type="EMDB" id="EMD-32273"/>
<dbReference type="EMDB" id="EMD-32274"/>
<dbReference type="EMDB" id="EMD-32275"/>
<dbReference type="EMDB" id="EMD-32276"/>
<dbReference type="EMDB" id="EMD-32277"/>
<dbReference type="EMDB" id="EMD-32278"/>
<dbReference type="EMDB" id="EMD-32279"/>
<dbReference type="EMDB" id="EMD-32280"/>
<dbReference type="EMDB" id="EMD-32281"/>
<dbReference type="EMDB" id="EMD-32282"/>
<dbReference type="EMDB" id="EMD-32283"/>
<dbReference type="EMDB" id="EMD-32284"/>
<dbReference type="EMDB" id="EMD-36598"/>
<dbReference type="EMDB" id="EMD-36605"/>
<dbReference type="EMDB" id="EMD-36645"/>
<dbReference type="EMDB" id="EMD-36764"/>
<dbReference type="EMDB" id="EMD-4089"/>
<dbReference type="EMDB" id="EMD-4146"/>
<dbReference type="EMDB" id="EMD-42506"/>
<dbReference type="EMDB" id="EMD-42507"/>
<dbReference type="EMDB" id="EMD-47719"/>
<dbReference type="EMDB" id="EMD-47720"/>
<dbReference type="EMDB" id="EMD-47721"/>
<dbReference type="EMDB" id="EMD-47722"/>
<dbReference type="EMDB" id="EMD-47723"/>
<dbReference type="EMDB" id="EMD-47724"/>
<dbReference type="EMDB" id="EMD-47725"/>
<dbReference type="EMDB" id="EMD-47726"/>
<dbReference type="EMDB" id="EMD-47727"/>
<dbReference type="EMDB" id="EMD-60138"/>
<dbReference type="EMDB" id="EMD-60139"/>
<dbReference type="EMDB" id="EMD-8663"/>
<dbReference type="EMDB" id="EMD-8664"/>
<dbReference type="EMDB" id="EMD-8665"/>
<dbReference type="EMDB" id="EMD-8666"/>
<dbReference type="EMDB" id="EMD-8667"/>
<dbReference type="EMDB" id="EMD-8668"/>
<dbReference type="EMDB" id="EMD-8672"/>
<dbReference type="EMDB" id="EMD-8674"/>
<dbReference type="EMDB" id="EMD-8675"/>
<dbReference type="EMDB" id="EMD-8676"/>
<dbReference type="EMDB" id="EMD-8684"/>
<dbReference type="EMDB" id="EMD-9216"/>
<dbReference type="EMDB" id="EMD-9217"/>
<dbReference type="EMDB" id="EMD-9218"/>
<dbReference type="EMDB" id="EMD-9219"/>
<dbReference type="EMDB" id="EMD-9220"/>
<dbReference type="EMDB" id="EMD-9221"/>
<dbReference type="EMDB" id="EMD-9222"/>
<dbReference type="EMDB" id="EMD-9511"/>
<dbReference type="EMDB" id="EMD-9512"/>
<dbReference type="SMR" id="O00232"/>
<dbReference type="BioGRID" id="111690">
    <property type="interactions" value="344"/>
</dbReference>
<dbReference type="ComplexPortal" id="CPX-5993">
    <property type="entry name" value="26S proteasome complex"/>
</dbReference>
<dbReference type="ComplexPortal" id="CPX-8964">
    <property type="entry name" value="19S proteasome regulatory complex"/>
</dbReference>
<dbReference type="ComplexPortal" id="CPX-9082">
    <property type="entry name" value="19S-20S-PA28-alphabeta hybrid proteasome complex"/>
</dbReference>
<dbReference type="ComplexPortal" id="CPX-9085">
    <property type="entry name" value="19S-20S-PA28-gamma hybrid proteasome complex"/>
</dbReference>
<dbReference type="ComplexPortal" id="CPX-9086">
    <property type="entry name" value="30S proteasome complex"/>
</dbReference>
<dbReference type="CORUM" id="O00232"/>
<dbReference type="DIP" id="DIP-27549N"/>
<dbReference type="FunCoup" id="O00232">
    <property type="interactions" value="2643"/>
</dbReference>
<dbReference type="IntAct" id="O00232">
    <property type="interactions" value="127"/>
</dbReference>
<dbReference type="MINT" id="O00232"/>
<dbReference type="STRING" id="9606.ENSP00000348442"/>
<dbReference type="ChEMBL" id="CHEMBL2364701"/>
<dbReference type="GlyGen" id="O00232">
    <property type="glycosylation" value="1 site, 1 O-linked glycan (1 site)"/>
</dbReference>
<dbReference type="iPTMnet" id="O00232"/>
<dbReference type="MetOSite" id="O00232"/>
<dbReference type="PhosphoSitePlus" id="O00232"/>
<dbReference type="SwissPalm" id="O00232"/>
<dbReference type="BioMuta" id="PSMD12"/>
<dbReference type="jPOST" id="O00232"/>
<dbReference type="MassIVE" id="O00232"/>
<dbReference type="PaxDb" id="9606-ENSP00000348442"/>
<dbReference type="PeptideAtlas" id="O00232"/>
<dbReference type="PRIDE" id="O00232"/>
<dbReference type="ProteomicsDB" id="47797">
    <molecule id="O00232-1"/>
</dbReference>
<dbReference type="ProteomicsDB" id="47798">
    <molecule id="O00232-2"/>
</dbReference>
<dbReference type="Pumba" id="O00232"/>
<dbReference type="Antibodypedia" id="19204">
    <property type="antibodies" value="220 antibodies from 30 providers"/>
</dbReference>
<dbReference type="DNASU" id="5718"/>
<dbReference type="Ensembl" id="ENST00000356126.8">
    <molecule id="O00232-1"/>
    <property type="protein sequence ID" value="ENSP00000348442.3"/>
    <property type="gene ID" value="ENSG00000197170.10"/>
</dbReference>
<dbReference type="Ensembl" id="ENST00000357146.4">
    <molecule id="O00232-2"/>
    <property type="protein sequence ID" value="ENSP00000349667.4"/>
    <property type="gene ID" value="ENSG00000197170.10"/>
</dbReference>
<dbReference type="GeneID" id="5718"/>
<dbReference type="KEGG" id="hsa:5718"/>
<dbReference type="MANE-Select" id="ENST00000356126.8">
    <property type="protein sequence ID" value="ENSP00000348442.3"/>
    <property type="RefSeq nucleotide sequence ID" value="NM_002816.5"/>
    <property type="RefSeq protein sequence ID" value="NP_002807.1"/>
</dbReference>
<dbReference type="UCSC" id="uc002jfy.4">
    <molecule id="O00232-1"/>
    <property type="organism name" value="human"/>
</dbReference>
<dbReference type="AGR" id="HGNC:9557"/>
<dbReference type="CTD" id="5718"/>
<dbReference type="DisGeNET" id="5718"/>
<dbReference type="GeneCards" id="PSMD12"/>
<dbReference type="HGNC" id="HGNC:9557">
    <property type="gene designation" value="PSMD12"/>
</dbReference>
<dbReference type="HPA" id="ENSG00000197170">
    <property type="expression patterns" value="Low tissue specificity"/>
</dbReference>
<dbReference type="MalaCards" id="PSMD12"/>
<dbReference type="MIM" id="604450">
    <property type="type" value="gene"/>
</dbReference>
<dbReference type="MIM" id="617516">
    <property type="type" value="phenotype"/>
</dbReference>
<dbReference type="neXtProt" id="NX_O00232"/>
<dbReference type="OpenTargets" id="ENSG00000197170"/>
<dbReference type="Orphanet" id="529962">
    <property type="disease" value="17q24.2 microdeletion syndrome"/>
</dbReference>
<dbReference type="Orphanet" id="528084">
    <property type="disease" value="Non-specific syndromic intellectual disability"/>
</dbReference>
<dbReference type="PharmGKB" id="PA33903"/>
<dbReference type="VEuPathDB" id="HostDB:ENSG00000197170"/>
<dbReference type="eggNOG" id="KOG1498">
    <property type="taxonomic scope" value="Eukaryota"/>
</dbReference>
<dbReference type="GeneTree" id="ENSGT00940000153510"/>
<dbReference type="HOGENOM" id="CLU_033860_2_0_1"/>
<dbReference type="InParanoid" id="O00232"/>
<dbReference type="OMA" id="AENEMFK"/>
<dbReference type="OrthoDB" id="268763at2759"/>
<dbReference type="PAN-GO" id="O00232">
    <property type="GO annotations" value="3 GO annotations based on evolutionary models"/>
</dbReference>
<dbReference type="PhylomeDB" id="O00232"/>
<dbReference type="TreeFam" id="TF105721"/>
<dbReference type="PathwayCommons" id="O00232"/>
<dbReference type="Reactome" id="R-HSA-1169091">
    <property type="pathway name" value="Activation of NF-kappaB in B cells"/>
</dbReference>
<dbReference type="Reactome" id="R-HSA-1234176">
    <property type="pathway name" value="Oxygen-dependent proline hydroxylation of Hypoxia-inducible Factor Alpha"/>
</dbReference>
<dbReference type="Reactome" id="R-HSA-1236974">
    <property type="pathway name" value="ER-Phagosome pathway"/>
</dbReference>
<dbReference type="Reactome" id="R-HSA-1236978">
    <property type="pathway name" value="Cross-presentation of soluble exogenous antigens (endosomes)"/>
</dbReference>
<dbReference type="Reactome" id="R-HSA-174084">
    <property type="pathway name" value="Autodegradation of Cdh1 by Cdh1:APC/C"/>
</dbReference>
<dbReference type="Reactome" id="R-HSA-174113">
    <property type="pathway name" value="SCF-beta-TrCP mediated degradation of Emi1"/>
</dbReference>
<dbReference type="Reactome" id="R-HSA-174154">
    <property type="pathway name" value="APC/C:Cdc20 mediated degradation of Securin"/>
</dbReference>
<dbReference type="Reactome" id="R-HSA-174178">
    <property type="pathway name" value="APC/C:Cdh1 mediated degradation of Cdc20 and other APC/C:Cdh1 targeted proteins in late mitosis/early G1"/>
</dbReference>
<dbReference type="Reactome" id="R-HSA-174184">
    <property type="pathway name" value="Cdc20:Phospho-APC/C mediated degradation of Cyclin A"/>
</dbReference>
<dbReference type="Reactome" id="R-HSA-180534">
    <property type="pathway name" value="Vpu mediated degradation of CD4"/>
</dbReference>
<dbReference type="Reactome" id="R-HSA-180585">
    <property type="pathway name" value="Vif-mediated degradation of APOBEC3G"/>
</dbReference>
<dbReference type="Reactome" id="R-HSA-187577">
    <property type="pathway name" value="SCF(Skp2)-mediated degradation of p27/p21"/>
</dbReference>
<dbReference type="Reactome" id="R-HSA-195253">
    <property type="pathway name" value="Degradation of beta-catenin by the destruction complex"/>
</dbReference>
<dbReference type="Reactome" id="R-HSA-202424">
    <property type="pathway name" value="Downstream TCR signaling"/>
</dbReference>
<dbReference type="Reactome" id="R-HSA-211733">
    <property type="pathway name" value="Regulation of activated PAK-2p34 by proteasome mediated degradation"/>
</dbReference>
<dbReference type="Reactome" id="R-HSA-2467813">
    <property type="pathway name" value="Separation of Sister Chromatids"/>
</dbReference>
<dbReference type="Reactome" id="R-HSA-2871837">
    <property type="pathway name" value="FCERI mediated NF-kB activation"/>
</dbReference>
<dbReference type="Reactome" id="R-HSA-349425">
    <property type="pathway name" value="Autodegradation of the E3 ubiquitin ligase COP1"/>
</dbReference>
<dbReference type="Reactome" id="R-HSA-350562">
    <property type="pathway name" value="Regulation of ornithine decarboxylase (ODC)"/>
</dbReference>
<dbReference type="Reactome" id="R-HSA-382556">
    <property type="pathway name" value="ABC-family proteins mediated transport"/>
</dbReference>
<dbReference type="Reactome" id="R-HSA-450408">
    <property type="pathway name" value="AUF1 (hnRNP D0) binds and destabilizes mRNA"/>
</dbReference>
<dbReference type="Reactome" id="R-HSA-4608870">
    <property type="pathway name" value="Asymmetric localization of PCP proteins"/>
</dbReference>
<dbReference type="Reactome" id="R-HSA-4641257">
    <property type="pathway name" value="Degradation of AXIN"/>
</dbReference>
<dbReference type="Reactome" id="R-HSA-4641258">
    <property type="pathway name" value="Degradation of DVL"/>
</dbReference>
<dbReference type="Reactome" id="R-HSA-5358346">
    <property type="pathway name" value="Hedgehog ligand biogenesis"/>
</dbReference>
<dbReference type="Reactome" id="R-HSA-5362768">
    <property type="pathway name" value="Hh mutants are degraded by ERAD"/>
</dbReference>
<dbReference type="Reactome" id="R-HSA-5607761">
    <property type="pathway name" value="Dectin-1 mediated noncanonical NF-kB signaling"/>
</dbReference>
<dbReference type="Reactome" id="R-HSA-5607764">
    <property type="pathway name" value="CLEC7A (Dectin-1) signaling"/>
</dbReference>
<dbReference type="Reactome" id="R-HSA-5610780">
    <property type="pathway name" value="Degradation of GLI1 by the proteasome"/>
</dbReference>
<dbReference type="Reactome" id="R-HSA-5610783">
    <property type="pathway name" value="Degradation of GLI2 by the proteasome"/>
</dbReference>
<dbReference type="Reactome" id="R-HSA-5610785">
    <property type="pathway name" value="GLI3 is processed to GLI3R by the proteasome"/>
</dbReference>
<dbReference type="Reactome" id="R-HSA-5632684">
    <property type="pathway name" value="Hedgehog 'on' state"/>
</dbReference>
<dbReference type="Reactome" id="R-HSA-5658442">
    <property type="pathway name" value="Regulation of RAS by GAPs"/>
</dbReference>
<dbReference type="Reactome" id="R-HSA-5668541">
    <property type="pathway name" value="TNFR2 non-canonical NF-kB pathway"/>
</dbReference>
<dbReference type="Reactome" id="R-HSA-5676590">
    <property type="pathway name" value="NIK--&gt;noncanonical NF-kB signaling"/>
</dbReference>
<dbReference type="Reactome" id="R-HSA-5678895">
    <property type="pathway name" value="Defective CFTR causes cystic fibrosis"/>
</dbReference>
<dbReference type="Reactome" id="R-HSA-5687128">
    <property type="pathway name" value="MAPK6/MAPK4 signaling"/>
</dbReference>
<dbReference type="Reactome" id="R-HSA-5689603">
    <property type="pathway name" value="UCH proteinases"/>
</dbReference>
<dbReference type="Reactome" id="R-HSA-5689880">
    <property type="pathway name" value="Ub-specific processing proteases"/>
</dbReference>
<dbReference type="Reactome" id="R-HSA-6798695">
    <property type="pathway name" value="Neutrophil degranulation"/>
</dbReference>
<dbReference type="Reactome" id="R-HSA-68867">
    <property type="pathway name" value="Assembly of the pre-replicative complex"/>
</dbReference>
<dbReference type="Reactome" id="R-HSA-68949">
    <property type="pathway name" value="Orc1 removal from chromatin"/>
</dbReference>
<dbReference type="Reactome" id="R-HSA-69017">
    <property type="pathway name" value="CDK-mediated phosphorylation and removal of Cdc6"/>
</dbReference>
<dbReference type="Reactome" id="R-HSA-69481">
    <property type="pathway name" value="G2/M Checkpoints"/>
</dbReference>
<dbReference type="Reactome" id="R-HSA-69601">
    <property type="pathway name" value="Ubiquitin Mediated Degradation of Phosphorylated Cdc25A"/>
</dbReference>
<dbReference type="Reactome" id="R-HSA-75815">
    <property type="pathway name" value="Ubiquitin-dependent degradation of Cyclin D"/>
</dbReference>
<dbReference type="Reactome" id="R-HSA-8852276">
    <property type="pathway name" value="The role of GTSE1 in G2/M progression after G2 checkpoint"/>
</dbReference>
<dbReference type="Reactome" id="R-HSA-8854050">
    <property type="pathway name" value="FBXL7 down-regulates AURKA during mitotic entry and in early mitosis"/>
</dbReference>
<dbReference type="Reactome" id="R-HSA-8939236">
    <property type="pathway name" value="RUNX1 regulates transcription of genes involved in differentiation of HSCs"/>
</dbReference>
<dbReference type="Reactome" id="R-HSA-8939902">
    <property type="pathway name" value="Regulation of RUNX2 expression and activity"/>
</dbReference>
<dbReference type="Reactome" id="R-HSA-8941858">
    <property type="pathway name" value="Regulation of RUNX3 expression and activity"/>
</dbReference>
<dbReference type="Reactome" id="R-HSA-8948751">
    <property type="pathway name" value="Regulation of PTEN stability and activity"/>
</dbReference>
<dbReference type="Reactome" id="R-HSA-8951664">
    <property type="pathway name" value="Neddylation"/>
</dbReference>
<dbReference type="Reactome" id="R-HSA-9010553">
    <property type="pathway name" value="Regulation of expression of SLITs and ROBOs"/>
</dbReference>
<dbReference type="Reactome" id="R-HSA-9020702">
    <property type="pathway name" value="Interleukin-1 signaling"/>
</dbReference>
<dbReference type="Reactome" id="R-HSA-9604323">
    <property type="pathway name" value="Negative regulation of NOTCH4 signaling"/>
</dbReference>
<dbReference type="Reactome" id="R-HSA-9755511">
    <property type="pathway name" value="KEAP1-NFE2L2 pathway"/>
</dbReference>
<dbReference type="Reactome" id="R-HSA-9762114">
    <property type="pathway name" value="GSK3B and BTRC:CUL1-mediated-degradation of NFE2L2"/>
</dbReference>
<dbReference type="Reactome" id="R-HSA-9824272">
    <property type="pathway name" value="Somitogenesis"/>
</dbReference>
<dbReference type="Reactome" id="R-HSA-983168">
    <property type="pathway name" value="Antigen processing: Ubiquitination &amp; Proteasome degradation"/>
</dbReference>
<dbReference type="Reactome" id="R-HSA-9907900">
    <property type="pathway name" value="Proteasome assembly"/>
</dbReference>
<dbReference type="SignaLink" id="O00232"/>
<dbReference type="SIGNOR" id="O00232"/>
<dbReference type="BioGRID-ORCS" id="5718">
    <property type="hits" value="821 hits in 1131 CRISPR screens"/>
</dbReference>
<dbReference type="ChiTaRS" id="PSMD12">
    <property type="organism name" value="human"/>
</dbReference>
<dbReference type="GeneWiki" id="PSMD12"/>
<dbReference type="GenomeRNAi" id="5718"/>
<dbReference type="Pharos" id="O00232">
    <property type="development level" value="Tbio"/>
</dbReference>
<dbReference type="PRO" id="PR:O00232"/>
<dbReference type="Proteomes" id="UP000005640">
    <property type="component" value="Chromosome 17"/>
</dbReference>
<dbReference type="RNAct" id="O00232">
    <property type="molecule type" value="protein"/>
</dbReference>
<dbReference type="Bgee" id="ENSG00000197170">
    <property type="expression patterns" value="Expressed in primordial germ cell in gonad and 211 other cell types or tissues"/>
</dbReference>
<dbReference type="ExpressionAtlas" id="O00232">
    <property type="expression patterns" value="baseline and differential"/>
</dbReference>
<dbReference type="GO" id="GO:0005737">
    <property type="term" value="C:cytoplasm"/>
    <property type="evidence" value="ECO:0000318"/>
    <property type="project" value="GO_Central"/>
</dbReference>
<dbReference type="GO" id="GO:0005829">
    <property type="term" value="C:cytosol"/>
    <property type="evidence" value="ECO:0000304"/>
    <property type="project" value="Reactome"/>
</dbReference>
<dbReference type="GO" id="GO:0070062">
    <property type="term" value="C:extracellular exosome"/>
    <property type="evidence" value="ECO:0007005"/>
    <property type="project" value="UniProtKB"/>
</dbReference>
<dbReference type="GO" id="GO:0005576">
    <property type="term" value="C:extracellular region"/>
    <property type="evidence" value="ECO:0000304"/>
    <property type="project" value="Reactome"/>
</dbReference>
<dbReference type="GO" id="GO:1904813">
    <property type="term" value="C:ficolin-1-rich granule lumen"/>
    <property type="evidence" value="ECO:0000304"/>
    <property type="project" value="Reactome"/>
</dbReference>
<dbReference type="GO" id="GO:0016020">
    <property type="term" value="C:membrane"/>
    <property type="evidence" value="ECO:0007005"/>
    <property type="project" value="UniProtKB"/>
</dbReference>
<dbReference type="GO" id="GO:0005654">
    <property type="term" value="C:nucleoplasm"/>
    <property type="evidence" value="ECO:0000304"/>
    <property type="project" value="Reactome"/>
</dbReference>
<dbReference type="GO" id="GO:0022624">
    <property type="term" value="C:proteasome accessory complex"/>
    <property type="evidence" value="ECO:0000250"/>
    <property type="project" value="UniProtKB"/>
</dbReference>
<dbReference type="GO" id="GO:0000502">
    <property type="term" value="C:proteasome complex"/>
    <property type="evidence" value="ECO:0000314"/>
    <property type="project" value="UniProtKB"/>
</dbReference>
<dbReference type="GO" id="GO:0005838">
    <property type="term" value="C:proteasome regulatory particle"/>
    <property type="evidence" value="ECO:0000304"/>
    <property type="project" value="ProtInc"/>
</dbReference>
<dbReference type="GO" id="GO:0008541">
    <property type="term" value="C:proteasome regulatory particle, lid subcomplex"/>
    <property type="evidence" value="ECO:0000318"/>
    <property type="project" value="GO_Central"/>
</dbReference>
<dbReference type="GO" id="GO:0034774">
    <property type="term" value="C:secretory granule lumen"/>
    <property type="evidence" value="ECO:0000304"/>
    <property type="project" value="Reactome"/>
</dbReference>
<dbReference type="GO" id="GO:0043161">
    <property type="term" value="P:proteasome-mediated ubiquitin-dependent protein catabolic process"/>
    <property type="evidence" value="ECO:0000303"/>
    <property type="project" value="ComplexPortal"/>
</dbReference>
<dbReference type="FunFam" id="1.10.10.10:FF:000159">
    <property type="entry name" value="26S proteasome non-ATPase regulatory subunit 12"/>
    <property type="match status" value="1"/>
</dbReference>
<dbReference type="Gene3D" id="1.10.10.10">
    <property type="entry name" value="Winged helix-like DNA-binding domain superfamily/Winged helix DNA-binding domain"/>
    <property type="match status" value="1"/>
</dbReference>
<dbReference type="InterPro" id="IPR000717">
    <property type="entry name" value="PCI_dom"/>
</dbReference>
<dbReference type="InterPro" id="IPR054559">
    <property type="entry name" value="PSMD12-CSN4-like_N"/>
</dbReference>
<dbReference type="InterPro" id="IPR040134">
    <property type="entry name" value="PSMD12/CSN4"/>
</dbReference>
<dbReference type="InterPro" id="IPR040896">
    <property type="entry name" value="RPN5_C"/>
</dbReference>
<dbReference type="InterPro" id="IPR036388">
    <property type="entry name" value="WH-like_DNA-bd_sf"/>
</dbReference>
<dbReference type="InterPro" id="IPR036390">
    <property type="entry name" value="WH_DNA-bd_sf"/>
</dbReference>
<dbReference type="PANTHER" id="PTHR10855:SF1">
    <property type="entry name" value="26S PROTEASOME NON-ATPASE REGULATORY SUBUNIT 12"/>
    <property type="match status" value="1"/>
</dbReference>
<dbReference type="PANTHER" id="PTHR10855">
    <property type="entry name" value="26S PROTEASOME NON-ATPASE REGULATORY SUBUNIT 12/COP9 SIGNALOSOME COMPLEX SUBUNIT 4"/>
    <property type="match status" value="1"/>
</dbReference>
<dbReference type="Pfam" id="PF01399">
    <property type="entry name" value="PCI"/>
    <property type="match status" value="1"/>
</dbReference>
<dbReference type="Pfam" id="PF22241">
    <property type="entry name" value="PSMD12-CSN4_N"/>
    <property type="match status" value="1"/>
</dbReference>
<dbReference type="Pfam" id="PF18098">
    <property type="entry name" value="RPN5_C"/>
    <property type="match status" value="1"/>
</dbReference>
<dbReference type="SMART" id="SM00088">
    <property type="entry name" value="PINT"/>
    <property type="match status" value="1"/>
</dbReference>
<dbReference type="SUPFAM" id="SSF46785">
    <property type="entry name" value="Winged helix' DNA-binding domain"/>
    <property type="match status" value="1"/>
</dbReference>
<dbReference type="PROSITE" id="PS50250">
    <property type="entry name" value="PCI"/>
    <property type="match status" value="1"/>
</dbReference>